<keyword id="KW-0002">3D-structure</keyword>
<keyword id="KW-0963">Cytoplasm</keyword>
<keyword id="KW-0285">Flavoprotein</keyword>
<keyword id="KW-0288">FMN</keyword>
<keyword id="KW-0520">NAD</keyword>
<keyword id="KW-0521">NADP</keyword>
<keyword id="KW-0539">Nucleus</keyword>
<keyword id="KW-0560">Oxidoreductase</keyword>
<keyword id="KW-1185">Reference proteome</keyword>
<dbReference type="EC" id="1.5.1.39"/>
<dbReference type="EMBL" id="Z73183">
    <property type="protein sequence ID" value="CAA97533.1"/>
    <property type="molecule type" value="Genomic_DNA"/>
</dbReference>
<dbReference type="EMBL" id="AY558199">
    <property type="protein sequence ID" value="AAS56525.1"/>
    <property type="molecule type" value="Genomic_DNA"/>
</dbReference>
<dbReference type="EMBL" id="BK006945">
    <property type="protein sequence ID" value="DAA09329.1"/>
    <property type="molecule type" value="Genomic_DNA"/>
</dbReference>
<dbReference type="PIR" id="S64833">
    <property type="entry name" value="S64833"/>
</dbReference>
<dbReference type="RefSeq" id="NP_013111.1">
    <property type="nucleotide sequence ID" value="NM_001181898.1"/>
</dbReference>
<dbReference type="PDB" id="1T0I">
    <property type="method" value="X-ray"/>
    <property type="resolution" value="2.00 A"/>
    <property type="chains" value="A/B=1-191"/>
</dbReference>
<dbReference type="PDBsum" id="1T0I"/>
<dbReference type="SMR" id="Q07923"/>
<dbReference type="BioGRID" id="31285">
    <property type="interactions" value="66"/>
</dbReference>
<dbReference type="DIP" id="DIP-4604N"/>
<dbReference type="FunCoup" id="Q07923">
    <property type="interactions" value="48"/>
</dbReference>
<dbReference type="IntAct" id="Q07923">
    <property type="interactions" value="2"/>
</dbReference>
<dbReference type="MINT" id="Q07923"/>
<dbReference type="STRING" id="4932.YLR011W"/>
<dbReference type="PaxDb" id="4932-YLR011W"/>
<dbReference type="PeptideAtlas" id="Q07923"/>
<dbReference type="EnsemblFungi" id="YLR011W_mRNA">
    <property type="protein sequence ID" value="YLR011W"/>
    <property type="gene ID" value="YLR011W"/>
</dbReference>
<dbReference type="GeneID" id="850698"/>
<dbReference type="KEGG" id="sce:YLR011W"/>
<dbReference type="AGR" id="SGD:S000004001"/>
<dbReference type="SGD" id="S000004001">
    <property type="gene designation" value="LOT6"/>
</dbReference>
<dbReference type="VEuPathDB" id="FungiDB:YLR011W"/>
<dbReference type="eggNOG" id="KOG4530">
    <property type="taxonomic scope" value="Eukaryota"/>
</dbReference>
<dbReference type="GeneTree" id="ENSGT00390000005275"/>
<dbReference type="HOGENOM" id="CLU_055322_2_1_1"/>
<dbReference type="InParanoid" id="Q07923"/>
<dbReference type="OMA" id="NDHTKAW"/>
<dbReference type="OrthoDB" id="68575at2759"/>
<dbReference type="BioCyc" id="YEAST:G3O-32172-MONOMER"/>
<dbReference type="BRENDA" id="1.6.5.2">
    <property type="organism ID" value="984"/>
</dbReference>
<dbReference type="BioGRID-ORCS" id="850698">
    <property type="hits" value="0 hits in 10 CRISPR screens"/>
</dbReference>
<dbReference type="EvolutionaryTrace" id="Q07923"/>
<dbReference type="PRO" id="PR:Q07923"/>
<dbReference type="Proteomes" id="UP000002311">
    <property type="component" value="Chromosome XII"/>
</dbReference>
<dbReference type="RNAct" id="Q07923">
    <property type="molecule type" value="protein"/>
</dbReference>
<dbReference type="GO" id="GO:0005737">
    <property type="term" value="C:cytoplasm"/>
    <property type="evidence" value="ECO:0007005"/>
    <property type="project" value="SGD"/>
</dbReference>
<dbReference type="GO" id="GO:0005829">
    <property type="term" value="C:cytosol"/>
    <property type="evidence" value="ECO:0000314"/>
    <property type="project" value="SGD"/>
</dbReference>
<dbReference type="GO" id="GO:0005634">
    <property type="term" value="C:nucleus"/>
    <property type="evidence" value="ECO:0000314"/>
    <property type="project" value="SGD"/>
</dbReference>
<dbReference type="GO" id="GO:0010181">
    <property type="term" value="F:FMN binding"/>
    <property type="evidence" value="ECO:0000318"/>
    <property type="project" value="GO_Central"/>
</dbReference>
<dbReference type="GO" id="GO:0052874">
    <property type="term" value="F:FMN reductase (NADH) activity"/>
    <property type="evidence" value="ECO:0007669"/>
    <property type="project" value="RHEA"/>
</dbReference>
<dbReference type="GO" id="GO:0052873">
    <property type="term" value="F:FMN reductase (NADPH) activity"/>
    <property type="evidence" value="ECO:0007669"/>
    <property type="project" value="RHEA"/>
</dbReference>
<dbReference type="GO" id="GO:0008752">
    <property type="term" value="F:FMN reductase [NAD(P)H] activity"/>
    <property type="evidence" value="ECO:0007669"/>
    <property type="project" value="UniProtKB-EC"/>
</dbReference>
<dbReference type="GO" id="GO:0003955">
    <property type="term" value="F:NAD(P)H dehydrogenase (quinone) activity"/>
    <property type="evidence" value="ECO:0000314"/>
    <property type="project" value="SGD"/>
</dbReference>
<dbReference type="GO" id="GO:0006915">
    <property type="term" value="P:apoptotic process"/>
    <property type="evidence" value="ECO:0000315"/>
    <property type="project" value="SGD"/>
</dbReference>
<dbReference type="GO" id="GO:0034599">
    <property type="term" value="P:cellular response to oxidative stress"/>
    <property type="evidence" value="ECO:0000315"/>
    <property type="project" value="SGD"/>
</dbReference>
<dbReference type="FunFam" id="3.40.50.360:FF:000052">
    <property type="entry name" value="NAD(P)H-dependent FMN reductase LOT6"/>
    <property type="match status" value="1"/>
</dbReference>
<dbReference type="Gene3D" id="3.40.50.360">
    <property type="match status" value="1"/>
</dbReference>
<dbReference type="InterPro" id="IPR029039">
    <property type="entry name" value="Flavoprotein-like_sf"/>
</dbReference>
<dbReference type="InterPro" id="IPR005025">
    <property type="entry name" value="FMN_Rdtase-like_dom"/>
</dbReference>
<dbReference type="InterPro" id="IPR050712">
    <property type="entry name" value="NAD(P)H-dep_reductase"/>
</dbReference>
<dbReference type="PANTHER" id="PTHR30543">
    <property type="entry name" value="CHROMATE REDUCTASE"/>
    <property type="match status" value="1"/>
</dbReference>
<dbReference type="PANTHER" id="PTHR30543:SF21">
    <property type="entry name" value="NAD(P)H-DEPENDENT FMN REDUCTASE LOT6"/>
    <property type="match status" value="1"/>
</dbReference>
<dbReference type="Pfam" id="PF03358">
    <property type="entry name" value="FMN_red"/>
    <property type="match status" value="1"/>
</dbReference>
<dbReference type="SUPFAM" id="SSF52218">
    <property type="entry name" value="Flavoproteins"/>
    <property type="match status" value="1"/>
</dbReference>
<proteinExistence type="evidence at protein level"/>
<sequence>MKVGIIMGSVRAKRVCPEIAAYVKRTIENSEELIDQKLKIQVVDLQQIALPLYEDDDELIPAQIKSVDEYADSKTRSWSRIVNALDIIVFVTPQYNWGYPAALKNAIDRLYHEWHGKPALVVSYGGHGGSKCNDQLQEVLHGLKMNVIGGVAVKIPVGTIPLPEDIVPQLSVHNEEILQLLASCIETTRNK</sequence>
<gene>
    <name type="primary">LOT6</name>
    <name type="ordered locus">YLR011W</name>
</gene>
<organism>
    <name type="scientific">Saccharomyces cerevisiae (strain ATCC 204508 / S288c)</name>
    <name type="common">Baker's yeast</name>
    <dbReference type="NCBI Taxonomy" id="559292"/>
    <lineage>
        <taxon>Eukaryota</taxon>
        <taxon>Fungi</taxon>
        <taxon>Dikarya</taxon>
        <taxon>Ascomycota</taxon>
        <taxon>Saccharomycotina</taxon>
        <taxon>Saccharomycetes</taxon>
        <taxon>Saccharomycetales</taxon>
        <taxon>Saccharomycetaceae</taxon>
        <taxon>Saccharomyces</taxon>
    </lineage>
</organism>
<reference key="1">
    <citation type="journal article" date="1997" name="Nature">
        <title>The nucleotide sequence of Saccharomyces cerevisiae chromosome XII.</title>
        <authorList>
            <person name="Johnston M."/>
            <person name="Hillier L.W."/>
            <person name="Riles L."/>
            <person name="Albermann K."/>
            <person name="Andre B."/>
            <person name="Ansorge W."/>
            <person name="Benes V."/>
            <person name="Brueckner M."/>
            <person name="Delius H."/>
            <person name="Dubois E."/>
            <person name="Duesterhoeft A."/>
            <person name="Entian K.-D."/>
            <person name="Floeth M."/>
            <person name="Goffeau A."/>
            <person name="Hebling U."/>
            <person name="Heumann K."/>
            <person name="Heuss-Neitzel D."/>
            <person name="Hilbert H."/>
            <person name="Hilger F."/>
            <person name="Kleine K."/>
            <person name="Koetter P."/>
            <person name="Louis E.J."/>
            <person name="Messenguy F."/>
            <person name="Mewes H.-W."/>
            <person name="Miosga T."/>
            <person name="Moestl D."/>
            <person name="Mueller-Auer S."/>
            <person name="Nentwich U."/>
            <person name="Obermaier B."/>
            <person name="Piravandi E."/>
            <person name="Pohl T.M."/>
            <person name="Portetelle D."/>
            <person name="Purnelle B."/>
            <person name="Rechmann S."/>
            <person name="Rieger M."/>
            <person name="Rinke M."/>
            <person name="Rose M."/>
            <person name="Scharfe M."/>
            <person name="Scherens B."/>
            <person name="Scholler P."/>
            <person name="Schwager C."/>
            <person name="Schwarz S."/>
            <person name="Underwood A.P."/>
            <person name="Urrestarazu L.A."/>
            <person name="Vandenbol M."/>
            <person name="Verhasselt P."/>
            <person name="Vierendeels F."/>
            <person name="Voet M."/>
            <person name="Volckaert G."/>
            <person name="Voss H."/>
            <person name="Wambutt R."/>
            <person name="Wedler E."/>
            <person name="Wedler H."/>
            <person name="Zimmermann F.K."/>
            <person name="Zollner A."/>
            <person name="Hani J."/>
            <person name="Hoheisel J.D."/>
        </authorList>
    </citation>
    <scope>NUCLEOTIDE SEQUENCE [LARGE SCALE GENOMIC DNA]</scope>
    <source>
        <strain>ATCC 204508 / S288c</strain>
    </source>
</reference>
<reference key="2">
    <citation type="journal article" date="2014" name="G3 (Bethesda)">
        <title>The reference genome sequence of Saccharomyces cerevisiae: Then and now.</title>
        <authorList>
            <person name="Engel S.R."/>
            <person name="Dietrich F.S."/>
            <person name="Fisk D.G."/>
            <person name="Binkley G."/>
            <person name="Balakrishnan R."/>
            <person name="Costanzo M.C."/>
            <person name="Dwight S.S."/>
            <person name="Hitz B.C."/>
            <person name="Karra K."/>
            <person name="Nash R.S."/>
            <person name="Weng S."/>
            <person name="Wong E.D."/>
            <person name="Lloyd P."/>
            <person name="Skrzypek M.S."/>
            <person name="Miyasato S.R."/>
            <person name="Simison M."/>
            <person name="Cherry J.M."/>
        </authorList>
    </citation>
    <scope>GENOME REANNOTATION</scope>
    <source>
        <strain>ATCC 204508 / S288c</strain>
    </source>
</reference>
<reference key="3">
    <citation type="journal article" date="2007" name="Genome Res.">
        <title>Approaching a complete repository of sequence-verified protein-encoding clones for Saccharomyces cerevisiae.</title>
        <authorList>
            <person name="Hu Y."/>
            <person name="Rolfs A."/>
            <person name="Bhullar B."/>
            <person name="Murthy T.V.S."/>
            <person name="Zhu C."/>
            <person name="Berger M.F."/>
            <person name="Camargo A.A."/>
            <person name="Kelley F."/>
            <person name="McCarron S."/>
            <person name="Jepson D."/>
            <person name="Richardson A."/>
            <person name="Raphael J."/>
            <person name="Moreira D."/>
            <person name="Taycher E."/>
            <person name="Zuo D."/>
            <person name="Mohr S."/>
            <person name="Kane M.F."/>
            <person name="Williamson J."/>
            <person name="Simpson A.J.G."/>
            <person name="Bulyk M.L."/>
            <person name="Harlow E."/>
            <person name="Marsischky G."/>
            <person name="Kolodner R.D."/>
            <person name="LaBaer J."/>
        </authorList>
    </citation>
    <scope>NUCLEOTIDE SEQUENCE [GENOMIC DNA]</scope>
    <source>
        <strain>ATCC 204508 / S288c</strain>
    </source>
</reference>
<reference key="4">
    <citation type="journal article" date="2001" name="Biochem. Biophys. Res. Commun.">
        <title>Multiple mechanisms regulate expression of low temperature responsive (LOT) genes in Saccharomyces cerevisiae.</title>
        <authorList>
            <person name="Zhang L."/>
            <person name="Ohta A."/>
            <person name="Horiuchi H."/>
            <person name="Takagi M."/>
            <person name="Imai R."/>
        </authorList>
    </citation>
    <scope>INDUCTION</scope>
</reference>
<reference key="5">
    <citation type="journal article" date="2003" name="Nature">
        <title>Global analysis of protein localization in budding yeast.</title>
        <authorList>
            <person name="Huh W.-K."/>
            <person name="Falvo J.V."/>
            <person name="Gerke L.C."/>
            <person name="Carroll A.S."/>
            <person name="Howson R.W."/>
            <person name="Weissman J.S."/>
            <person name="O'Shea E.K."/>
        </authorList>
    </citation>
    <scope>SUBCELLULAR LOCATION [LARGE SCALE ANALYSIS]</scope>
</reference>
<reference key="6">
    <citation type="journal article" date="2003" name="Nature">
        <title>Global analysis of protein expression in yeast.</title>
        <authorList>
            <person name="Ghaemmaghami S."/>
            <person name="Huh W.-K."/>
            <person name="Bower K."/>
            <person name="Howson R.W."/>
            <person name="Belle A."/>
            <person name="Dephoure N."/>
            <person name="O'Shea E.K."/>
            <person name="Weissman J.S."/>
        </authorList>
    </citation>
    <scope>LEVEL OF PROTEIN EXPRESSION [LARGE SCALE ANALYSIS]</scope>
</reference>
<reference key="7">
    <citation type="journal article" date="2012" name="Proc. Natl. Acad. Sci. U.S.A.">
        <title>N-terminal acetylome analyses and functional insights of the N-terminal acetyltransferase NatB.</title>
        <authorList>
            <person name="Van Damme P."/>
            <person name="Lasa M."/>
            <person name="Polevoda B."/>
            <person name="Gazquez C."/>
            <person name="Elosegui-Artola A."/>
            <person name="Kim D.S."/>
            <person name="De Juan-Pardo E."/>
            <person name="Demeyer K."/>
            <person name="Hole K."/>
            <person name="Larrea E."/>
            <person name="Timmerman E."/>
            <person name="Prieto J."/>
            <person name="Arnesen T."/>
            <person name="Sherman F."/>
            <person name="Gevaert K."/>
            <person name="Aldabe R."/>
        </authorList>
    </citation>
    <scope>IDENTIFICATION BY MASS SPECTROMETRY [LARGE SCALE ANALYSIS]</scope>
</reference>
<reference key="8">
    <citation type="journal article" date="2004" name="J. Biol. Chem.">
        <title>Crystal structure and functional characterization of yeast YLR011wp, an enzyme with NAD(P)H-FMN and ferric iron reductase activities.</title>
        <authorList>
            <person name="Liger D."/>
            <person name="Graille M."/>
            <person name="Zhou C.-Z."/>
            <person name="Leulliot N."/>
            <person name="Quevillon-Cheruel S."/>
            <person name="Blondeau K."/>
            <person name="Janin J."/>
            <person name="van Tilbeurgh H."/>
        </authorList>
    </citation>
    <scope>X-RAY CRYSTALLOGRAPHY (2.0 ANGSTROMS)</scope>
    <scope>FUNCTION</scope>
    <scope>SUBUNIT</scope>
</reference>
<accession>Q07923</accession>
<accession>D6VY13</accession>
<protein>
    <recommendedName>
        <fullName>NAD(P)H-dependent FMN reductase LOT6</fullName>
        <shortName>FMN reductase LOT6</shortName>
        <ecNumber>1.5.1.39</ecNumber>
    </recommendedName>
    <alternativeName>
        <fullName>Azoreductase LOT6</fullName>
    </alternativeName>
    <alternativeName>
        <fullName>FMN reductase [NAD(P)H]</fullName>
    </alternativeName>
    <alternativeName>
        <fullName>Low temperature response protein 6</fullName>
    </alternativeName>
</protein>
<comment type="function">
    <text evidence="4">Has several reductase activities that are NAD(P)H-dependent and involve FMN as a cofactor, ferricyanide being the best substrate for reduction. May be involved in ferric iron assimilation.</text>
</comment>
<comment type="catalytic activity">
    <reaction>
        <text>FMNH2 + NADP(+) = FMN + NADPH + 2 H(+)</text>
        <dbReference type="Rhea" id="RHEA:21624"/>
        <dbReference type="ChEBI" id="CHEBI:15378"/>
        <dbReference type="ChEBI" id="CHEBI:57618"/>
        <dbReference type="ChEBI" id="CHEBI:57783"/>
        <dbReference type="ChEBI" id="CHEBI:58210"/>
        <dbReference type="ChEBI" id="CHEBI:58349"/>
        <dbReference type="EC" id="1.5.1.39"/>
    </reaction>
</comment>
<comment type="catalytic activity">
    <reaction>
        <text>FMNH2 + NAD(+) = FMN + NADH + 2 H(+)</text>
        <dbReference type="Rhea" id="RHEA:21620"/>
        <dbReference type="ChEBI" id="CHEBI:15378"/>
        <dbReference type="ChEBI" id="CHEBI:57540"/>
        <dbReference type="ChEBI" id="CHEBI:57618"/>
        <dbReference type="ChEBI" id="CHEBI:57945"/>
        <dbReference type="ChEBI" id="CHEBI:58210"/>
        <dbReference type="EC" id="1.5.1.39"/>
    </reaction>
</comment>
<comment type="subunit">
    <text evidence="4">Homodimer.</text>
</comment>
<comment type="subcellular location">
    <subcellularLocation>
        <location evidence="2">Cytoplasm</location>
    </subcellularLocation>
    <subcellularLocation>
        <location evidence="2">Nucleus</location>
    </subcellularLocation>
</comment>
<comment type="induction">
    <text evidence="1">Induced by low temperature and by cycloheximide.</text>
</comment>
<comment type="miscellaneous">
    <text evidence="3">Present with 1270 molecules/cell in log phase SD medium.</text>
</comment>
<feature type="chain" id="PRO_0000234661" description="NAD(P)H-dependent FMN reductase LOT6">
    <location>
        <begin position="1"/>
        <end position="191"/>
    </location>
</feature>
<feature type="binding site">
    <location>
        <position position="11"/>
    </location>
    <ligand>
        <name>FMN</name>
        <dbReference type="ChEBI" id="CHEBI:58210"/>
    </ligand>
</feature>
<feature type="binding site">
    <location>
        <begin position="94"/>
        <end position="97"/>
    </location>
    <ligand>
        <name>FMN</name>
        <dbReference type="ChEBI" id="CHEBI:58210"/>
    </ligand>
</feature>
<feature type="binding site">
    <location>
        <position position="124"/>
    </location>
    <ligand>
        <name>FMN</name>
        <dbReference type="ChEBI" id="CHEBI:58210"/>
    </ligand>
</feature>
<feature type="strand" evidence="5">
    <location>
        <begin position="2"/>
        <end position="7"/>
    </location>
</feature>
<feature type="helix" evidence="5">
    <location>
        <begin position="16"/>
        <end position="28"/>
    </location>
</feature>
<feature type="turn" evidence="5">
    <location>
        <begin position="31"/>
        <end position="37"/>
    </location>
</feature>
<feature type="strand" evidence="5">
    <location>
        <begin position="39"/>
        <end position="43"/>
    </location>
</feature>
<feature type="helix" evidence="5">
    <location>
        <begin position="45"/>
        <end position="48"/>
    </location>
</feature>
<feature type="helix" evidence="5">
    <location>
        <begin position="61"/>
        <end position="63"/>
    </location>
</feature>
<feature type="helix" evidence="5">
    <location>
        <begin position="67"/>
        <end position="69"/>
    </location>
</feature>
<feature type="helix" evidence="5">
    <location>
        <begin position="73"/>
        <end position="83"/>
    </location>
</feature>
<feature type="strand" evidence="5">
    <location>
        <begin position="86"/>
        <end position="93"/>
    </location>
</feature>
<feature type="helix" evidence="5">
    <location>
        <begin position="101"/>
        <end position="108"/>
    </location>
</feature>
<feature type="turn" evidence="5">
    <location>
        <begin position="112"/>
        <end position="116"/>
    </location>
</feature>
<feature type="strand" evidence="5">
    <location>
        <begin position="118"/>
        <end position="125"/>
    </location>
</feature>
<feature type="turn" evidence="5">
    <location>
        <begin position="126"/>
        <end position="129"/>
    </location>
</feature>
<feature type="helix" evidence="5">
    <location>
        <begin position="130"/>
        <end position="142"/>
    </location>
</feature>
<feature type="strand" evidence="5">
    <location>
        <begin position="146"/>
        <end position="154"/>
    </location>
</feature>
<feature type="turn" evidence="5">
    <location>
        <begin position="164"/>
        <end position="166"/>
    </location>
</feature>
<feature type="helix" evidence="5">
    <location>
        <begin position="168"/>
        <end position="173"/>
    </location>
</feature>
<feature type="helix" evidence="5">
    <location>
        <begin position="174"/>
        <end position="184"/>
    </location>
</feature>
<name>LOT6_YEAST</name>
<evidence type="ECO:0000269" key="1">
    <source>
    </source>
</evidence>
<evidence type="ECO:0000269" key="2">
    <source>
    </source>
</evidence>
<evidence type="ECO:0000269" key="3">
    <source>
    </source>
</evidence>
<evidence type="ECO:0000269" key="4">
    <source>
    </source>
</evidence>
<evidence type="ECO:0007829" key="5">
    <source>
        <dbReference type="PDB" id="1T0I"/>
    </source>
</evidence>